<name>3NO25_NAJSP</name>
<proteinExistence type="inferred from homology"/>
<protein>
    <recommendedName>
        <fullName evidence="4">Weak neurotoxin 5</fullName>
        <shortName evidence="4">Wntx-5</shortName>
    </recommendedName>
</protein>
<feature type="signal peptide" evidence="1">
    <location>
        <begin position="1"/>
        <end position="21"/>
    </location>
</feature>
<feature type="chain" id="PRO_0000035475" description="Weak neurotoxin 5" evidence="6">
    <location>
        <begin position="22"/>
        <end position="86"/>
    </location>
</feature>
<feature type="disulfide bond" evidence="2">
    <location>
        <begin position="24"/>
        <end position="45"/>
    </location>
</feature>
<feature type="disulfide bond" evidence="2">
    <location>
        <begin position="27"/>
        <end position="32"/>
    </location>
</feature>
<feature type="disulfide bond" evidence="2">
    <location>
        <begin position="38"/>
        <end position="63"/>
    </location>
</feature>
<feature type="disulfide bond" evidence="2">
    <location>
        <begin position="67"/>
        <end position="78"/>
    </location>
</feature>
<feature type="disulfide bond" evidence="2">
    <location>
        <begin position="79"/>
        <end position="84"/>
    </location>
</feature>
<organism>
    <name type="scientific">Naja sputatrix</name>
    <name type="common">Malayan spitting cobra</name>
    <name type="synonym">Naja naja sputatrix</name>
    <dbReference type="NCBI Taxonomy" id="33626"/>
    <lineage>
        <taxon>Eukaryota</taxon>
        <taxon>Metazoa</taxon>
        <taxon>Chordata</taxon>
        <taxon>Craniata</taxon>
        <taxon>Vertebrata</taxon>
        <taxon>Euteleostomi</taxon>
        <taxon>Lepidosauria</taxon>
        <taxon>Squamata</taxon>
        <taxon>Bifurcata</taxon>
        <taxon>Unidentata</taxon>
        <taxon>Episquamata</taxon>
        <taxon>Toxicofera</taxon>
        <taxon>Serpentes</taxon>
        <taxon>Colubroidea</taxon>
        <taxon>Elapidae</taxon>
        <taxon>Elapinae</taxon>
        <taxon>Naja</taxon>
    </lineage>
</organism>
<keyword id="KW-0008">Acetylcholine receptor inhibiting toxin</keyword>
<keyword id="KW-1015">Disulfide bond</keyword>
<keyword id="KW-0872">Ion channel impairing toxin</keyword>
<keyword id="KW-0528">Neurotoxin</keyword>
<keyword id="KW-0629">Postsynaptic neurotoxin</keyword>
<keyword id="KW-0964">Secreted</keyword>
<keyword id="KW-0732">Signal</keyword>
<keyword id="KW-0800">Toxin</keyword>
<comment type="function">
    <text evidence="3">Binds with low affinity to muscular and very low affinity to neuronal (alpha-7/CHRNA7) nicotinic acetylcholine receptor (nAChR).</text>
</comment>
<comment type="subcellular location">
    <subcellularLocation>
        <location evidence="1">Secreted</location>
    </subcellularLocation>
</comment>
<comment type="tissue specificity">
    <text evidence="5">Expressed by the venom gland.</text>
</comment>
<comment type="similarity">
    <text evidence="5">Belongs to the three-finger toxin family. Ancestral subfamily. Orphan group II sub-subfamily.</text>
</comment>
<sequence>MKTLLLTLVVVTIVCLDLGYTLTCLNCPEMFCGKFQTCRNGEKICFKKLQQRRPFSLRYIRGCAATCPGTKPRDMVECCSTDRCNR</sequence>
<evidence type="ECO:0000250" key="1"/>
<evidence type="ECO:0000250" key="2">
    <source>
        <dbReference type="UniProtKB" id="Q8AY51"/>
    </source>
</evidence>
<evidence type="ECO:0000269" key="3">
    <source>
    </source>
</evidence>
<evidence type="ECO:0000303" key="4">
    <source>
    </source>
</evidence>
<evidence type="ECO:0000305" key="5"/>
<evidence type="ECO:0000305" key="6">
    <source>
    </source>
</evidence>
<accession>O42255</accession>
<reference key="1">
    <citation type="journal article" date="2002" name="Eur. J. Biochem.">
        <title>A synthetic weak neurotoxin binds with low affinity to Torpedo and chicken alpha7 nicotinic acetylcholine receptors.</title>
        <authorList>
            <person name="Poh S.L."/>
            <person name="Mourier G."/>
            <person name="Thai R."/>
            <person name="Armugam A."/>
            <person name="Molgo J."/>
            <person name="Servent D."/>
            <person name="Jeyaseelan K."/>
            <person name="Menez A."/>
        </authorList>
    </citation>
    <scope>NUCLEOTIDE SEQUENCE [MRNA]</scope>
    <scope>SYNTHESIS OF 22-86</scope>
    <scope>FUNCTION</scope>
    <source>
        <tissue>Venom gland</tissue>
    </source>
</reference>
<reference key="2">
    <citation type="journal article" date="2003" name="FEBS Lett.">
        <title>Structurally conserved alpha-neurotoxin genes encode functionally diverse proteins in the venom of Naja sputatrix.</title>
        <authorList>
            <person name="Jeyaseelan K."/>
            <person name="Poh S.L."/>
            <person name="Nair R."/>
            <person name="Armugam A."/>
        </authorList>
    </citation>
    <scope>NUCLEOTIDE SEQUENCE [MRNA]</scope>
    <source>
        <tissue>Venom gland</tissue>
    </source>
</reference>
<dbReference type="EMBL" id="AF026891">
    <property type="protein sequence ID" value="AAB87415.1"/>
    <property type="molecule type" value="mRNA"/>
</dbReference>
<dbReference type="EMBL" id="AY081761">
    <property type="protein sequence ID" value="AAL87467.1"/>
    <property type="molecule type" value="Genomic_DNA"/>
</dbReference>
<dbReference type="SMR" id="O42255"/>
<dbReference type="GO" id="GO:0005576">
    <property type="term" value="C:extracellular region"/>
    <property type="evidence" value="ECO:0007669"/>
    <property type="project" value="UniProtKB-SubCell"/>
</dbReference>
<dbReference type="GO" id="GO:0030550">
    <property type="term" value="F:acetylcholine receptor inhibitor activity"/>
    <property type="evidence" value="ECO:0007669"/>
    <property type="project" value="UniProtKB-KW"/>
</dbReference>
<dbReference type="GO" id="GO:0099106">
    <property type="term" value="F:ion channel regulator activity"/>
    <property type="evidence" value="ECO:0007669"/>
    <property type="project" value="UniProtKB-KW"/>
</dbReference>
<dbReference type="GO" id="GO:0090729">
    <property type="term" value="F:toxin activity"/>
    <property type="evidence" value="ECO:0007669"/>
    <property type="project" value="UniProtKB-KW"/>
</dbReference>
<dbReference type="CDD" id="cd00206">
    <property type="entry name" value="TFP_snake_toxin"/>
    <property type="match status" value="1"/>
</dbReference>
<dbReference type="FunFam" id="2.10.60.10:FF:000024">
    <property type="entry name" value="Cytotoxin 1"/>
    <property type="match status" value="1"/>
</dbReference>
<dbReference type="Gene3D" id="2.10.60.10">
    <property type="entry name" value="CD59"/>
    <property type="match status" value="1"/>
</dbReference>
<dbReference type="InterPro" id="IPR003571">
    <property type="entry name" value="Snake_3FTx"/>
</dbReference>
<dbReference type="InterPro" id="IPR045860">
    <property type="entry name" value="Snake_toxin-like_sf"/>
</dbReference>
<dbReference type="InterPro" id="IPR018354">
    <property type="entry name" value="Snake_toxin_con_site"/>
</dbReference>
<dbReference type="InterPro" id="IPR054131">
    <property type="entry name" value="Toxin_cobra-type"/>
</dbReference>
<dbReference type="Pfam" id="PF21947">
    <property type="entry name" value="Toxin_cobra-type"/>
    <property type="match status" value="1"/>
</dbReference>
<dbReference type="SUPFAM" id="SSF57302">
    <property type="entry name" value="Snake toxin-like"/>
    <property type="match status" value="1"/>
</dbReference>
<dbReference type="PROSITE" id="PS00272">
    <property type="entry name" value="SNAKE_TOXIN"/>
    <property type="match status" value="1"/>
</dbReference>